<dbReference type="EC" id="3.5.4.28" evidence="1"/>
<dbReference type="EC" id="3.5.4.31" evidence="1"/>
<dbReference type="EMBL" id="CP001176">
    <property type="protein sequence ID" value="ACK60992.1"/>
    <property type="molecule type" value="Genomic_DNA"/>
</dbReference>
<dbReference type="SMR" id="B7HIQ2"/>
<dbReference type="KEGG" id="bcb:BCB4264_A1866"/>
<dbReference type="HOGENOM" id="CLU_012358_2_1_9"/>
<dbReference type="Proteomes" id="UP000007096">
    <property type="component" value="Chromosome"/>
</dbReference>
<dbReference type="GO" id="GO:0090614">
    <property type="term" value="F:5'-methylthioadenosine deaminase activity"/>
    <property type="evidence" value="ECO:0007669"/>
    <property type="project" value="UniProtKB-UniRule"/>
</dbReference>
<dbReference type="GO" id="GO:0046872">
    <property type="term" value="F:metal ion binding"/>
    <property type="evidence" value="ECO:0007669"/>
    <property type="project" value="UniProtKB-KW"/>
</dbReference>
<dbReference type="GO" id="GO:0050270">
    <property type="term" value="F:S-adenosylhomocysteine deaminase activity"/>
    <property type="evidence" value="ECO:0007669"/>
    <property type="project" value="UniProtKB-UniRule"/>
</dbReference>
<dbReference type="CDD" id="cd01298">
    <property type="entry name" value="ATZ_TRZ_like"/>
    <property type="match status" value="1"/>
</dbReference>
<dbReference type="FunFam" id="3.20.20.140:FF:000014">
    <property type="entry name" value="5-methylthioadenosine/S-adenosylhomocysteine deaminase"/>
    <property type="match status" value="1"/>
</dbReference>
<dbReference type="Gene3D" id="3.20.20.140">
    <property type="entry name" value="Metal-dependent hydrolases"/>
    <property type="match status" value="1"/>
</dbReference>
<dbReference type="Gene3D" id="2.30.40.10">
    <property type="entry name" value="Urease, subunit C, domain 1"/>
    <property type="match status" value="1"/>
</dbReference>
<dbReference type="HAMAP" id="MF_01281">
    <property type="entry name" value="MTA_SAH_deamin"/>
    <property type="match status" value="1"/>
</dbReference>
<dbReference type="InterPro" id="IPR006680">
    <property type="entry name" value="Amidohydro-rel"/>
</dbReference>
<dbReference type="InterPro" id="IPR023512">
    <property type="entry name" value="Deaminase_MtaD/DadD"/>
</dbReference>
<dbReference type="InterPro" id="IPR011059">
    <property type="entry name" value="Metal-dep_hydrolase_composite"/>
</dbReference>
<dbReference type="InterPro" id="IPR032466">
    <property type="entry name" value="Metal_Hydrolase"/>
</dbReference>
<dbReference type="InterPro" id="IPR050287">
    <property type="entry name" value="MTA/SAH_deaminase"/>
</dbReference>
<dbReference type="NCBIfam" id="NF012037">
    <property type="entry name" value="PRK15493.1"/>
    <property type="match status" value="1"/>
</dbReference>
<dbReference type="PANTHER" id="PTHR43794:SF11">
    <property type="entry name" value="AMIDOHYDROLASE-RELATED DOMAIN-CONTAINING PROTEIN"/>
    <property type="match status" value="1"/>
</dbReference>
<dbReference type="PANTHER" id="PTHR43794">
    <property type="entry name" value="AMINOHYDROLASE SSNA-RELATED"/>
    <property type="match status" value="1"/>
</dbReference>
<dbReference type="Pfam" id="PF01979">
    <property type="entry name" value="Amidohydro_1"/>
    <property type="match status" value="1"/>
</dbReference>
<dbReference type="SUPFAM" id="SSF51338">
    <property type="entry name" value="Composite domain of metallo-dependent hydrolases"/>
    <property type="match status" value="1"/>
</dbReference>
<dbReference type="SUPFAM" id="SSF51556">
    <property type="entry name" value="Metallo-dependent hydrolases"/>
    <property type="match status" value="1"/>
</dbReference>
<reference key="1">
    <citation type="submission" date="2008-10" db="EMBL/GenBank/DDBJ databases">
        <title>Genome sequence of Bacillus cereus B4264.</title>
        <authorList>
            <person name="Dodson R.J."/>
            <person name="Durkin A.S."/>
            <person name="Rosovitz M.J."/>
            <person name="Rasko D.A."/>
            <person name="Hoffmaster A."/>
            <person name="Ravel J."/>
            <person name="Sutton G."/>
        </authorList>
    </citation>
    <scope>NUCLEOTIDE SEQUENCE [LARGE SCALE GENOMIC DNA]</scope>
    <source>
        <strain>B4264</strain>
    </source>
</reference>
<name>MTAD_BACC4</name>
<protein>
    <recommendedName>
        <fullName evidence="1">5-methylthioadenosine/S-adenosylhomocysteine deaminase</fullName>
        <shortName evidence="1">MTA/SAH deaminase</shortName>
        <ecNumber evidence="1">3.5.4.28</ecNumber>
        <ecNumber evidence="1">3.5.4.31</ecNumber>
    </recommendedName>
</protein>
<comment type="function">
    <text evidence="1">Catalyzes the deamination of 5-methylthioadenosine and S-adenosyl-L-homocysteine into 5-methylthioinosine and S-inosyl-L-homocysteine, respectively. Is also able to deaminate adenosine.</text>
</comment>
<comment type="catalytic activity">
    <reaction evidence="1">
        <text>S-adenosyl-L-homocysteine + H2O + H(+) = S-inosyl-L-homocysteine + NH4(+)</text>
        <dbReference type="Rhea" id="RHEA:20716"/>
        <dbReference type="ChEBI" id="CHEBI:15377"/>
        <dbReference type="ChEBI" id="CHEBI:15378"/>
        <dbReference type="ChEBI" id="CHEBI:28938"/>
        <dbReference type="ChEBI" id="CHEBI:57856"/>
        <dbReference type="ChEBI" id="CHEBI:57985"/>
        <dbReference type="EC" id="3.5.4.28"/>
    </reaction>
</comment>
<comment type="catalytic activity">
    <reaction evidence="1">
        <text>S-methyl-5'-thioadenosine + H2O + H(+) = S-methyl-5'-thioinosine + NH4(+)</text>
        <dbReference type="Rhea" id="RHEA:25025"/>
        <dbReference type="ChEBI" id="CHEBI:15377"/>
        <dbReference type="ChEBI" id="CHEBI:15378"/>
        <dbReference type="ChEBI" id="CHEBI:17509"/>
        <dbReference type="ChEBI" id="CHEBI:28938"/>
        <dbReference type="ChEBI" id="CHEBI:48595"/>
        <dbReference type="EC" id="3.5.4.31"/>
    </reaction>
</comment>
<comment type="cofactor">
    <cofactor evidence="1">
        <name>Zn(2+)</name>
        <dbReference type="ChEBI" id="CHEBI:29105"/>
    </cofactor>
    <text evidence="1">Binds 1 zinc ion per subunit.</text>
</comment>
<comment type="similarity">
    <text evidence="1">Belongs to the metallo-dependent hydrolases superfamily. MTA/SAH deaminase family.</text>
</comment>
<proteinExistence type="inferred from homology"/>
<gene>
    <name evidence="1" type="primary">mtaD</name>
    <name type="ordered locus">BCB4264_A1866</name>
</gene>
<feature type="chain" id="PRO_1000140347" description="5-methylthioadenosine/S-adenosylhomocysteine deaminase">
    <location>
        <begin position="1"/>
        <end position="435"/>
    </location>
</feature>
<feature type="binding site" evidence="1">
    <location>
        <position position="65"/>
    </location>
    <ligand>
        <name>Zn(2+)</name>
        <dbReference type="ChEBI" id="CHEBI:29105"/>
    </ligand>
</feature>
<feature type="binding site" evidence="1">
    <location>
        <position position="67"/>
    </location>
    <ligand>
        <name>Zn(2+)</name>
        <dbReference type="ChEBI" id="CHEBI:29105"/>
    </ligand>
</feature>
<feature type="binding site" evidence="1">
    <location>
        <position position="94"/>
    </location>
    <ligand>
        <name>substrate</name>
    </ligand>
</feature>
<feature type="binding site" evidence="1">
    <location>
        <position position="150"/>
    </location>
    <ligand>
        <name>substrate</name>
    </ligand>
</feature>
<feature type="binding site" evidence="1">
    <location>
        <position position="189"/>
    </location>
    <ligand>
        <name>substrate</name>
    </ligand>
</feature>
<feature type="binding site" evidence="1">
    <location>
        <position position="216"/>
    </location>
    <ligand>
        <name>Zn(2+)</name>
        <dbReference type="ChEBI" id="CHEBI:29105"/>
    </ligand>
</feature>
<feature type="binding site" evidence="1">
    <location>
        <position position="219"/>
    </location>
    <ligand>
        <name>substrate</name>
    </ligand>
</feature>
<feature type="binding site" evidence="1">
    <location>
        <position position="304"/>
    </location>
    <ligand>
        <name>substrate</name>
    </ligand>
</feature>
<feature type="binding site" evidence="1">
    <location>
        <position position="304"/>
    </location>
    <ligand>
        <name>Zn(2+)</name>
        <dbReference type="ChEBI" id="CHEBI:29105"/>
    </ligand>
</feature>
<organism>
    <name type="scientific">Bacillus cereus (strain B4264)</name>
    <dbReference type="NCBI Taxonomy" id="405532"/>
    <lineage>
        <taxon>Bacteria</taxon>
        <taxon>Bacillati</taxon>
        <taxon>Bacillota</taxon>
        <taxon>Bacilli</taxon>
        <taxon>Bacillales</taxon>
        <taxon>Bacillaceae</taxon>
        <taxon>Bacillus</taxon>
        <taxon>Bacillus cereus group</taxon>
    </lineage>
</organism>
<sequence length="435" mass="48096">MKTTYVNATIVTMNEQNEVIENGYIIVENDQIIDVKSGKFANDFEVDEVIDMKGKWVLPGLVNTHTHVVMSLLRGIGDDMLLQPWLETRIWPLESQFTPQIAVASTELGLLEMVKSGTTSFSDMFNPIGVDQDAIMETVSRSGMRAAVSRTLFSFGTKDDEKKAIEEAEKYVKRYYNESGMLTTMVAPHSPYTCSTELLEECARIAVENQTMVHIHLSETEREVRDIEAQYGKRPVEYAASCGLFKRPTVIAHGVVLNDDERAFLAENDVRVAHNPNSNLKLGSGIANVKAMLEAGIKVGIATDSVASNNNLDMFEEMRIATLLQKGIHQDATALPVETALTLATKGAAEVIGMKQTGSLEIGKCADFITIDPSNKPHLQPADEVLSHLVYAASGKDISDVIINGKHVVWNGECKTLDEERIIFEASRYKRGLQR</sequence>
<accession>B7HIQ2</accession>
<evidence type="ECO:0000255" key="1">
    <source>
        <dbReference type="HAMAP-Rule" id="MF_01281"/>
    </source>
</evidence>
<keyword id="KW-0378">Hydrolase</keyword>
<keyword id="KW-0479">Metal-binding</keyword>
<keyword id="KW-0862">Zinc</keyword>